<dbReference type="EC" id="2.7.4.6" evidence="1"/>
<dbReference type="EMBL" id="CP000548">
    <property type="protein sequence ID" value="ABO06578.1"/>
    <property type="molecule type" value="Genomic_DNA"/>
</dbReference>
<dbReference type="RefSeq" id="WP_004193561.1">
    <property type="nucleotide sequence ID" value="NZ_CP007802.1"/>
</dbReference>
<dbReference type="SMR" id="A3MK78"/>
<dbReference type="GeneID" id="92979081"/>
<dbReference type="KEGG" id="bmaz:BM44_1987"/>
<dbReference type="KEGG" id="bmn:BMA10247_1110"/>
<dbReference type="PATRIC" id="fig|320389.8.peg.2231"/>
<dbReference type="GO" id="GO:0005737">
    <property type="term" value="C:cytoplasm"/>
    <property type="evidence" value="ECO:0007669"/>
    <property type="project" value="UniProtKB-SubCell"/>
</dbReference>
<dbReference type="GO" id="GO:0005524">
    <property type="term" value="F:ATP binding"/>
    <property type="evidence" value="ECO:0007669"/>
    <property type="project" value="UniProtKB-UniRule"/>
</dbReference>
<dbReference type="GO" id="GO:0046872">
    <property type="term" value="F:metal ion binding"/>
    <property type="evidence" value="ECO:0007669"/>
    <property type="project" value="UniProtKB-KW"/>
</dbReference>
<dbReference type="GO" id="GO:0004550">
    <property type="term" value="F:nucleoside diphosphate kinase activity"/>
    <property type="evidence" value="ECO:0007669"/>
    <property type="project" value="UniProtKB-UniRule"/>
</dbReference>
<dbReference type="GO" id="GO:0006241">
    <property type="term" value="P:CTP biosynthetic process"/>
    <property type="evidence" value="ECO:0007669"/>
    <property type="project" value="UniProtKB-UniRule"/>
</dbReference>
<dbReference type="GO" id="GO:0006183">
    <property type="term" value="P:GTP biosynthetic process"/>
    <property type="evidence" value="ECO:0007669"/>
    <property type="project" value="UniProtKB-UniRule"/>
</dbReference>
<dbReference type="GO" id="GO:0006228">
    <property type="term" value="P:UTP biosynthetic process"/>
    <property type="evidence" value="ECO:0007669"/>
    <property type="project" value="UniProtKB-UniRule"/>
</dbReference>
<dbReference type="CDD" id="cd04413">
    <property type="entry name" value="NDPk_I"/>
    <property type="match status" value="1"/>
</dbReference>
<dbReference type="FunFam" id="3.30.70.141:FF:000001">
    <property type="entry name" value="Nucleoside diphosphate kinase"/>
    <property type="match status" value="1"/>
</dbReference>
<dbReference type="Gene3D" id="3.30.70.141">
    <property type="entry name" value="Nucleoside diphosphate kinase-like domain"/>
    <property type="match status" value="1"/>
</dbReference>
<dbReference type="HAMAP" id="MF_00451">
    <property type="entry name" value="NDP_kinase"/>
    <property type="match status" value="1"/>
</dbReference>
<dbReference type="InterPro" id="IPR034907">
    <property type="entry name" value="NDK-like_dom"/>
</dbReference>
<dbReference type="InterPro" id="IPR036850">
    <property type="entry name" value="NDK-like_dom_sf"/>
</dbReference>
<dbReference type="InterPro" id="IPR001564">
    <property type="entry name" value="Nucleoside_diP_kinase"/>
</dbReference>
<dbReference type="InterPro" id="IPR023005">
    <property type="entry name" value="Nucleoside_diP_kinase_AS"/>
</dbReference>
<dbReference type="NCBIfam" id="NF001908">
    <property type="entry name" value="PRK00668.1"/>
    <property type="match status" value="1"/>
</dbReference>
<dbReference type="PANTHER" id="PTHR46161">
    <property type="entry name" value="NUCLEOSIDE DIPHOSPHATE KINASE"/>
    <property type="match status" value="1"/>
</dbReference>
<dbReference type="PANTHER" id="PTHR46161:SF3">
    <property type="entry name" value="NUCLEOSIDE DIPHOSPHATE KINASE DDB_G0292928-RELATED"/>
    <property type="match status" value="1"/>
</dbReference>
<dbReference type="Pfam" id="PF00334">
    <property type="entry name" value="NDK"/>
    <property type="match status" value="1"/>
</dbReference>
<dbReference type="PRINTS" id="PR01243">
    <property type="entry name" value="NUCDPKINASE"/>
</dbReference>
<dbReference type="SMART" id="SM00562">
    <property type="entry name" value="NDK"/>
    <property type="match status" value="1"/>
</dbReference>
<dbReference type="SUPFAM" id="SSF54919">
    <property type="entry name" value="Nucleoside diphosphate kinase, NDK"/>
    <property type="match status" value="1"/>
</dbReference>
<dbReference type="PROSITE" id="PS00469">
    <property type="entry name" value="NDPK"/>
    <property type="match status" value="1"/>
</dbReference>
<dbReference type="PROSITE" id="PS51374">
    <property type="entry name" value="NDPK_LIKE"/>
    <property type="match status" value="1"/>
</dbReference>
<evidence type="ECO:0000255" key="1">
    <source>
        <dbReference type="HAMAP-Rule" id="MF_00451"/>
    </source>
</evidence>
<gene>
    <name evidence="1" type="primary">ndk</name>
    <name type="ordered locus">BMA10247_1110</name>
</gene>
<comment type="function">
    <text evidence="1">Major role in the synthesis of nucleoside triphosphates other than ATP. The ATP gamma phosphate is transferred to the NDP beta phosphate via a ping-pong mechanism, using a phosphorylated active-site intermediate.</text>
</comment>
<comment type="catalytic activity">
    <reaction evidence="1">
        <text>a 2'-deoxyribonucleoside 5'-diphosphate + ATP = a 2'-deoxyribonucleoside 5'-triphosphate + ADP</text>
        <dbReference type="Rhea" id="RHEA:44640"/>
        <dbReference type="ChEBI" id="CHEBI:30616"/>
        <dbReference type="ChEBI" id="CHEBI:61560"/>
        <dbReference type="ChEBI" id="CHEBI:73316"/>
        <dbReference type="ChEBI" id="CHEBI:456216"/>
        <dbReference type="EC" id="2.7.4.6"/>
    </reaction>
</comment>
<comment type="catalytic activity">
    <reaction evidence="1">
        <text>a ribonucleoside 5'-diphosphate + ATP = a ribonucleoside 5'-triphosphate + ADP</text>
        <dbReference type="Rhea" id="RHEA:18113"/>
        <dbReference type="ChEBI" id="CHEBI:30616"/>
        <dbReference type="ChEBI" id="CHEBI:57930"/>
        <dbReference type="ChEBI" id="CHEBI:61557"/>
        <dbReference type="ChEBI" id="CHEBI:456216"/>
        <dbReference type="EC" id="2.7.4.6"/>
    </reaction>
</comment>
<comment type="cofactor">
    <cofactor evidence="1">
        <name>Mg(2+)</name>
        <dbReference type="ChEBI" id="CHEBI:18420"/>
    </cofactor>
</comment>
<comment type="subunit">
    <text evidence="1">Homotetramer.</text>
</comment>
<comment type="subcellular location">
    <subcellularLocation>
        <location evidence="1">Cytoplasm</location>
    </subcellularLocation>
</comment>
<comment type="similarity">
    <text evidence="1">Belongs to the NDK family.</text>
</comment>
<protein>
    <recommendedName>
        <fullName evidence="1">Nucleoside diphosphate kinase</fullName>
        <shortName evidence="1">NDK</shortName>
        <shortName evidence="1">NDP kinase</shortName>
        <ecNumber evidence="1">2.7.4.6</ecNumber>
    </recommendedName>
    <alternativeName>
        <fullName evidence="1">Nucleoside-2-P kinase</fullName>
    </alternativeName>
</protein>
<sequence>MALERTLSIIKPDAVAKNVIGQIYSRFENAGLKIVAARMAHLSRADAEKFYAVHAERPFFKDLVDFMISGPVMIQVLEGEDAILKNRDLMGATDPKKAEKGTIRADFADSIDANAVHGSDAPETARAEVAFFFPEMNVYSR</sequence>
<feature type="chain" id="PRO_1000026214" description="Nucleoside diphosphate kinase">
    <location>
        <begin position="1"/>
        <end position="141"/>
    </location>
</feature>
<feature type="active site" description="Pros-phosphohistidine intermediate" evidence="1">
    <location>
        <position position="117"/>
    </location>
</feature>
<feature type="binding site" evidence="1">
    <location>
        <position position="11"/>
    </location>
    <ligand>
        <name>ATP</name>
        <dbReference type="ChEBI" id="CHEBI:30616"/>
    </ligand>
</feature>
<feature type="binding site" evidence="1">
    <location>
        <position position="59"/>
    </location>
    <ligand>
        <name>ATP</name>
        <dbReference type="ChEBI" id="CHEBI:30616"/>
    </ligand>
</feature>
<feature type="binding site" evidence="1">
    <location>
        <position position="87"/>
    </location>
    <ligand>
        <name>ATP</name>
        <dbReference type="ChEBI" id="CHEBI:30616"/>
    </ligand>
</feature>
<feature type="binding site" evidence="1">
    <location>
        <position position="93"/>
    </location>
    <ligand>
        <name>ATP</name>
        <dbReference type="ChEBI" id="CHEBI:30616"/>
    </ligand>
</feature>
<feature type="binding site" evidence="1">
    <location>
        <position position="104"/>
    </location>
    <ligand>
        <name>ATP</name>
        <dbReference type="ChEBI" id="CHEBI:30616"/>
    </ligand>
</feature>
<feature type="binding site" evidence="1">
    <location>
        <position position="114"/>
    </location>
    <ligand>
        <name>ATP</name>
        <dbReference type="ChEBI" id="CHEBI:30616"/>
    </ligand>
</feature>
<keyword id="KW-0067">ATP-binding</keyword>
<keyword id="KW-0963">Cytoplasm</keyword>
<keyword id="KW-0418">Kinase</keyword>
<keyword id="KW-0460">Magnesium</keyword>
<keyword id="KW-0479">Metal-binding</keyword>
<keyword id="KW-0546">Nucleotide metabolism</keyword>
<keyword id="KW-0547">Nucleotide-binding</keyword>
<keyword id="KW-0597">Phosphoprotein</keyword>
<keyword id="KW-0808">Transferase</keyword>
<reference key="1">
    <citation type="journal article" date="2010" name="Genome Biol. Evol.">
        <title>Continuing evolution of Burkholderia mallei through genome reduction and large-scale rearrangements.</title>
        <authorList>
            <person name="Losada L."/>
            <person name="Ronning C.M."/>
            <person name="DeShazer D."/>
            <person name="Woods D."/>
            <person name="Fedorova N."/>
            <person name="Kim H.S."/>
            <person name="Shabalina S.A."/>
            <person name="Pearson T.R."/>
            <person name="Brinkac L."/>
            <person name="Tan P."/>
            <person name="Nandi T."/>
            <person name="Crabtree J."/>
            <person name="Badger J."/>
            <person name="Beckstrom-Sternberg S."/>
            <person name="Saqib M."/>
            <person name="Schutzer S.E."/>
            <person name="Keim P."/>
            <person name="Nierman W.C."/>
        </authorList>
    </citation>
    <scope>NUCLEOTIDE SEQUENCE [LARGE SCALE GENOMIC DNA]</scope>
    <source>
        <strain>NCTC 10247</strain>
    </source>
</reference>
<name>NDK_BURM7</name>
<accession>A3MK78</accession>
<proteinExistence type="inferred from homology"/>
<organism>
    <name type="scientific">Burkholderia mallei (strain NCTC 10247)</name>
    <dbReference type="NCBI Taxonomy" id="320389"/>
    <lineage>
        <taxon>Bacteria</taxon>
        <taxon>Pseudomonadati</taxon>
        <taxon>Pseudomonadota</taxon>
        <taxon>Betaproteobacteria</taxon>
        <taxon>Burkholderiales</taxon>
        <taxon>Burkholderiaceae</taxon>
        <taxon>Burkholderia</taxon>
        <taxon>pseudomallei group</taxon>
    </lineage>
</organism>